<gene>
    <name evidence="1" type="primary">rpl14e</name>
    <name type="ordered locus">MJ0657</name>
</gene>
<name>RL14E_METJA</name>
<reference key="1">
    <citation type="journal article" date="1996" name="Science">
        <title>Complete genome sequence of the methanogenic archaeon, Methanococcus jannaschii.</title>
        <authorList>
            <person name="Bult C.J."/>
            <person name="White O."/>
            <person name="Olsen G.J."/>
            <person name="Zhou L."/>
            <person name="Fleischmann R.D."/>
            <person name="Sutton G.G."/>
            <person name="Blake J.A."/>
            <person name="FitzGerald L.M."/>
            <person name="Clayton R.A."/>
            <person name="Gocayne J.D."/>
            <person name="Kerlavage A.R."/>
            <person name="Dougherty B.A."/>
            <person name="Tomb J.-F."/>
            <person name="Adams M.D."/>
            <person name="Reich C.I."/>
            <person name="Overbeek R."/>
            <person name="Kirkness E.F."/>
            <person name="Weinstock K.G."/>
            <person name="Merrick J.M."/>
            <person name="Glodek A."/>
            <person name="Scott J.L."/>
            <person name="Geoghagen N.S.M."/>
            <person name="Weidman J.F."/>
            <person name="Fuhrmann J.L."/>
            <person name="Nguyen D."/>
            <person name="Utterback T.R."/>
            <person name="Kelley J.M."/>
            <person name="Peterson J.D."/>
            <person name="Sadow P.W."/>
            <person name="Hanna M.C."/>
            <person name="Cotton M.D."/>
            <person name="Roberts K.M."/>
            <person name="Hurst M.A."/>
            <person name="Kaine B.P."/>
            <person name="Borodovsky M."/>
            <person name="Klenk H.-P."/>
            <person name="Fraser C.M."/>
            <person name="Smith H.O."/>
            <person name="Woese C.R."/>
            <person name="Venter J.C."/>
        </authorList>
    </citation>
    <scope>NUCLEOTIDE SEQUENCE [LARGE SCALE GENOMIC DNA]</scope>
    <source>
        <strain>ATCC 43067 / DSM 2661 / JAL-1 / JCM 10045 / NBRC 100440</strain>
    </source>
</reference>
<comment type="similarity">
    <text evidence="1">Belongs to the eukaryotic ribosomal protein eL14 family.</text>
</comment>
<protein>
    <recommendedName>
        <fullName evidence="1">Large ribosomal subunit protein eL14</fullName>
    </recommendedName>
    <alternativeName>
        <fullName evidence="2">50S ribosomal protein L14e</fullName>
    </alternativeName>
</protein>
<dbReference type="EMBL" id="L77117">
    <property type="protein sequence ID" value="AAB98652.1"/>
    <property type="molecule type" value="Genomic_DNA"/>
</dbReference>
<dbReference type="PIR" id="A64382">
    <property type="entry name" value="A64382"/>
</dbReference>
<dbReference type="RefSeq" id="WP_010870162.1">
    <property type="nucleotide sequence ID" value="NC_000909.1"/>
</dbReference>
<dbReference type="SMR" id="P54054"/>
<dbReference type="FunCoup" id="P54054">
    <property type="interactions" value="124"/>
</dbReference>
<dbReference type="STRING" id="243232.MJ_0657"/>
<dbReference type="PaxDb" id="243232-MJ_0657"/>
<dbReference type="EnsemblBacteria" id="AAB98652">
    <property type="protein sequence ID" value="AAB98652"/>
    <property type="gene ID" value="MJ_0657"/>
</dbReference>
<dbReference type="GeneID" id="24891860"/>
<dbReference type="KEGG" id="mja:MJ_0657"/>
<dbReference type="eggNOG" id="arCOG04167">
    <property type="taxonomic scope" value="Archaea"/>
</dbReference>
<dbReference type="HOGENOM" id="CLU_183474_0_0_2"/>
<dbReference type="InParanoid" id="P54054"/>
<dbReference type="OrthoDB" id="63594at2157"/>
<dbReference type="PhylomeDB" id="P54054"/>
<dbReference type="Proteomes" id="UP000000805">
    <property type="component" value="Chromosome"/>
</dbReference>
<dbReference type="GO" id="GO:0022625">
    <property type="term" value="C:cytosolic large ribosomal subunit"/>
    <property type="evidence" value="ECO:0000318"/>
    <property type="project" value="GO_Central"/>
</dbReference>
<dbReference type="GO" id="GO:0003723">
    <property type="term" value="F:RNA binding"/>
    <property type="evidence" value="ECO:0000318"/>
    <property type="project" value="GO_Central"/>
</dbReference>
<dbReference type="GO" id="GO:0003735">
    <property type="term" value="F:structural constituent of ribosome"/>
    <property type="evidence" value="ECO:0000318"/>
    <property type="project" value="GO_Central"/>
</dbReference>
<dbReference type="GO" id="GO:0042273">
    <property type="term" value="P:ribosomal large subunit biogenesis"/>
    <property type="evidence" value="ECO:0000318"/>
    <property type="project" value="GO_Central"/>
</dbReference>
<dbReference type="GO" id="GO:0006412">
    <property type="term" value="P:translation"/>
    <property type="evidence" value="ECO:0007669"/>
    <property type="project" value="UniProtKB-UniRule"/>
</dbReference>
<dbReference type="CDD" id="cd06088">
    <property type="entry name" value="KOW_RPL14"/>
    <property type="match status" value="1"/>
</dbReference>
<dbReference type="FunFam" id="2.30.30.30:FF:000045">
    <property type="entry name" value="50S ribosomal protein L14e"/>
    <property type="match status" value="1"/>
</dbReference>
<dbReference type="Gene3D" id="2.30.30.30">
    <property type="match status" value="1"/>
</dbReference>
<dbReference type="HAMAP" id="MF_00721">
    <property type="entry name" value="Ribosomal_eL14"/>
    <property type="match status" value="1"/>
</dbReference>
<dbReference type="InterPro" id="IPR005824">
    <property type="entry name" value="KOW"/>
</dbReference>
<dbReference type="InterPro" id="IPR014722">
    <property type="entry name" value="Rib_uL2_dom2"/>
</dbReference>
<dbReference type="InterPro" id="IPR039660">
    <property type="entry name" value="Ribosomal_eL14"/>
</dbReference>
<dbReference type="InterPro" id="IPR023651">
    <property type="entry name" value="Ribosomal_eL14_arc"/>
</dbReference>
<dbReference type="InterPro" id="IPR041985">
    <property type="entry name" value="Ribosomal_eL14_KOW"/>
</dbReference>
<dbReference type="InterPro" id="IPR008991">
    <property type="entry name" value="Translation_prot_SH3-like_sf"/>
</dbReference>
<dbReference type="NCBIfam" id="NF003320">
    <property type="entry name" value="PRK04333.1"/>
    <property type="match status" value="1"/>
</dbReference>
<dbReference type="PANTHER" id="PTHR11127">
    <property type="entry name" value="60S RIBOSOMAL PROTEIN L14"/>
    <property type="match status" value="1"/>
</dbReference>
<dbReference type="PANTHER" id="PTHR11127:SF2">
    <property type="entry name" value="LARGE RIBOSOMAL SUBUNIT PROTEIN EL14"/>
    <property type="match status" value="1"/>
</dbReference>
<dbReference type="Pfam" id="PF00467">
    <property type="entry name" value="KOW"/>
    <property type="match status" value="1"/>
</dbReference>
<dbReference type="SUPFAM" id="SSF50104">
    <property type="entry name" value="Translation proteins SH3-like domain"/>
    <property type="match status" value="1"/>
</dbReference>
<keyword id="KW-1185">Reference proteome</keyword>
<keyword id="KW-0687">Ribonucleoprotein</keyword>
<keyword id="KW-0689">Ribosomal protein</keyword>
<evidence type="ECO:0000255" key="1">
    <source>
        <dbReference type="HAMAP-Rule" id="MF_00721"/>
    </source>
</evidence>
<evidence type="ECO:0000305" key="2"/>
<proteinExistence type="inferred from homology"/>
<sequence>MPAIEVGRVCIKTAGREAGKVCVIVDILDKNFVIVDGLVKRRRCNIKHLEPTEKKVDIPKGASTEEVKLALDAAGLLKEE</sequence>
<accession>P54054</accession>
<organism>
    <name type="scientific">Methanocaldococcus jannaschii (strain ATCC 43067 / DSM 2661 / JAL-1 / JCM 10045 / NBRC 100440)</name>
    <name type="common">Methanococcus jannaschii</name>
    <dbReference type="NCBI Taxonomy" id="243232"/>
    <lineage>
        <taxon>Archaea</taxon>
        <taxon>Methanobacteriati</taxon>
        <taxon>Methanobacteriota</taxon>
        <taxon>Methanomada group</taxon>
        <taxon>Methanococci</taxon>
        <taxon>Methanococcales</taxon>
        <taxon>Methanocaldococcaceae</taxon>
        <taxon>Methanocaldococcus</taxon>
    </lineage>
</organism>
<feature type="chain" id="PRO_0000132046" description="Large ribosomal subunit protein eL14">
    <location>
        <begin position="1"/>
        <end position="80"/>
    </location>
</feature>